<name>Y1994_CLOBM</name>
<reference key="1">
    <citation type="journal article" date="2007" name="PLoS ONE">
        <title>Analysis of the neurotoxin complex genes in Clostridium botulinum A1-A4 and B1 strains: BoNT/A3, /Ba4 and /B1 clusters are located within plasmids.</title>
        <authorList>
            <person name="Smith T.J."/>
            <person name="Hill K.K."/>
            <person name="Foley B.T."/>
            <person name="Detter J.C."/>
            <person name="Munk A.C."/>
            <person name="Bruce D.C."/>
            <person name="Doggett N.A."/>
            <person name="Smith L.A."/>
            <person name="Marks J.D."/>
            <person name="Xie G."/>
            <person name="Brettin T.S."/>
        </authorList>
    </citation>
    <scope>NUCLEOTIDE SEQUENCE [LARGE SCALE GENOMIC DNA]</scope>
    <source>
        <strain>Loch Maree / Type A3</strain>
    </source>
</reference>
<sequence length="62" mass="7489">MDMKKLIERINFLYKKSKEEGLTEEEKIEQQKLRREYIDIIKGNVKVQLEGVEKIPTPNRRN</sequence>
<gene>
    <name type="ordered locus">CLK_1994</name>
</gene>
<proteinExistence type="inferred from homology"/>
<organism>
    <name type="scientific">Clostridium botulinum (strain Loch Maree / Type A3)</name>
    <dbReference type="NCBI Taxonomy" id="498214"/>
    <lineage>
        <taxon>Bacteria</taxon>
        <taxon>Bacillati</taxon>
        <taxon>Bacillota</taxon>
        <taxon>Clostridia</taxon>
        <taxon>Eubacteriales</taxon>
        <taxon>Clostridiaceae</taxon>
        <taxon>Clostridium</taxon>
    </lineage>
</organism>
<evidence type="ECO:0000255" key="1">
    <source>
        <dbReference type="HAMAP-Rule" id="MF_01103"/>
    </source>
</evidence>
<keyword id="KW-0963">Cytoplasm</keyword>
<dbReference type="EMBL" id="CP000962">
    <property type="protein sequence ID" value="ACA54705.1"/>
    <property type="molecule type" value="Genomic_DNA"/>
</dbReference>
<dbReference type="RefSeq" id="WP_012342777.1">
    <property type="nucleotide sequence ID" value="NC_010520.1"/>
</dbReference>
<dbReference type="SMR" id="B1KXR9"/>
<dbReference type="KEGG" id="cbl:CLK_1994"/>
<dbReference type="HOGENOM" id="CLU_173137_3_1_9"/>
<dbReference type="GO" id="GO:0005737">
    <property type="term" value="C:cytoplasm"/>
    <property type="evidence" value="ECO:0007669"/>
    <property type="project" value="UniProtKB-SubCell"/>
</dbReference>
<dbReference type="Gene3D" id="1.10.287.540">
    <property type="entry name" value="Helix hairpin bin"/>
    <property type="match status" value="1"/>
</dbReference>
<dbReference type="HAMAP" id="MF_01103">
    <property type="entry name" value="UPF0291"/>
    <property type="match status" value="1"/>
</dbReference>
<dbReference type="InterPro" id="IPR009242">
    <property type="entry name" value="DUF896"/>
</dbReference>
<dbReference type="PANTHER" id="PTHR37300">
    <property type="entry name" value="UPF0291 PROTEIN CBO2609/CLC_2481"/>
    <property type="match status" value="1"/>
</dbReference>
<dbReference type="PANTHER" id="PTHR37300:SF1">
    <property type="entry name" value="UPF0291 PROTEIN YNZC"/>
    <property type="match status" value="1"/>
</dbReference>
<dbReference type="Pfam" id="PF05979">
    <property type="entry name" value="DUF896"/>
    <property type="match status" value="1"/>
</dbReference>
<dbReference type="SUPFAM" id="SSF158221">
    <property type="entry name" value="YnzC-like"/>
    <property type="match status" value="1"/>
</dbReference>
<protein>
    <recommendedName>
        <fullName evidence="1">UPF0291 protein CLK_1994</fullName>
    </recommendedName>
</protein>
<accession>B1KXR9</accession>
<feature type="chain" id="PRO_1000137010" description="UPF0291 protein CLK_1994">
    <location>
        <begin position="1"/>
        <end position="62"/>
    </location>
</feature>
<comment type="subcellular location">
    <subcellularLocation>
        <location evidence="1">Cytoplasm</location>
    </subcellularLocation>
</comment>
<comment type="similarity">
    <text evidence="1">Belongs to the UPF0291 family.</text>
</comment>